<sequence>MEGGGAPPADTVMSDAAPAPPQMGIENIPAVLSHGGRFIQYNIFGNIFEVTAKYKPPIMPIGKGAYGIVCSAHNSETNEHVAVKKIANAFDNKIDAKRTLREIKLLRHMDHENVVAIRDIVPPPQREVFNDVYIAYELMDTDLHQIIRSNQALSEEHCQYFLYQILRGLKYIHSANVLHRDLKPSNLLLNANCDLKICDFGLARVTSETDFMTEYVVTRWYRAPELLLNSSDYTAAIDVWSVGCIFMELMDRKPLFPGRDHVHQLRLLMELIGTPSEDDLGFLNENAKRYIRQLPPYRRQSFQEKFPHVHPEAIDLVEKMLTFDPRKRITVEDALAHPYLTSLHDISDEPVCMTPFSFDFEQHALTEEQMKELIYREALAFNPEYQQ</sequence>
<organism>
    <name type="scientific">Medicago sativa</name>
    <name type="common">Alfalfa</name>
    <dbReference type="NCBI Taxonomy" id="3879"/>
    <lineage>
        <taxon>Eukaryota</taxon>
        <taxon>Viridiplantae</taxon>
        <taxon>Streptophyta</taxon>
        <taxon>Embryophyta</taxon>
        <taxon>Tracheophyta</taxon>
        <taxon>Spermatophyta</taxon>
        <taxon>Magnoliopsida</taxon>
        <taxon>eudicotyledons</taxon>
        <taxon>Gunneridae</taxon>
        <taxon>Pentapetalae</taxon>
        <taxon>rosids</taxon>
        <taxon>fabids</taxon>
        <taxon>Fabales</taxon>
        <taxon>Fabaceae</taxon>
        <taxon>Papilionoideae</taxon>
        <taxon>50 kb inversion clade</taxon>
        <taxon>NPAAA clade</taxon>
        <taxon>Hologalegina</taxon>
        <taxon>IRL clade</taxon>
        <taxon>Trifolieae</taxon>
        <taxon>Medicago</taxon>
    </lineage>
</organism>
<gene>
    <name type="primary">MMK1</name>
    <name type="synonym">ERK1</name>
    <name type="synonym">MSK7</name>
</gene>
<protein>
    <recommendedName>
        <fullName>Mitogen-activated protein kinase homolog MMK1</fullName>
        <ecNumber>2.7.11.24</ecNumber>
    </recommendedName>
    <alternativeName>
        <fullName>MAP kinase ERK1</fullName>
    </alternativeName>
    <alternativeName>
        <fullName>MAP kinase MSK7</fullName>
    </alternativeName>
</protein>
<dbReference type="EC" id="2.7.11.24"/>
<dbReference type="EMBL" id="X66469">
    <property type="protein sequence ID" value="CAA47099.1"/>
    <property type="molecule type" value="mRNA"/>
</dbReference>
<dbReference type="EMBL" id="L07042">
    <property type="protein sequence ID" value="AAB41548.1"/>
    <property type="molecule type" value="mRNA"/>
</dbReference>
<dbReference type="PIR" id="S48123">
    <property type="entry name" value="S48123"/>
</dbReference>
<dbReference type="SMR" id="Q07176"/>
<dbReference type="iPTMnet" id="Q07176"/>
<dbReference type="BRENDA" id="2.7.11.24">
    <property type="organism ID" value="3078"/>
</dbReference>
<dbReference type="GO" id="GO:0005524">
    <property type="term" value="F:ATP binding"/>
    <property type="evidence" value="ECO:0007669"/>
    <property type="project" value="UniProtKB-KW"/>
</dbReference>
<dbReference type="GO" id="GO:0004707">
    <property type="term" value="F:MAP kinase activity"/>
    <property type="evidence" value="ECO:0007669"/>
    <property type="project" value="UniProtKB-EC"/>
</dbReference>
<dbReference type="GO" id="GO:0106310">
    <property type="term" value="F:protein serine kinase activity"/>
    <property type="evidence" value="ECO:0007669"/>
    <property type="project" value="RHEA"/>
</dbReference>
<dbReference type="GO" id="GO:0051301">
    <property type="term" value="P:cell division"/>
    <property type="evidence" value="ECO:0007669"/>
    <property type="project" value="UniProtKB-KW"/>
</dbReference>
<dbReference type="CDD" id="cd07858">
    <property type="entry name" value="STKc_TEY_MAPK"/>
    <property type="match status" value="1"/>
</dbReference>
<dbReference type="FunFam" id="1.10.510.10:FF:000013">
    <property type="entry name" value="Mitogen-activated protein kinase"/>
    <property type="match status" value="1"/>
</dbReference>
<dbReference type="FunFam" id="3.30.200.20:FF:000046">
    <property type="entry name" value="Mitogen-activated protein kinase"/>
    <property type="match status" value="1"/>
</dbReference>
<dbReference type="Gene3D" id="3.30.200.20">
    <property type="entry name" value="Phosphorylase Kinase, domain 1"/>
    <property type="match status" value="1"/>
</dbReference>
<dbReference type="Gene3D" id="1.10.510.10">
    <property type="entry name" value="Transferase(Phosphotransferase) domain 1"/>
    <property type="match status" value="1"/>
</dbReference>
<dbReference type="InterPro" id="IPR011009">
    <property type="entry name" value="Kinase-like_dom_sf"/>
</dbReference>
<dbReference type="InterPro" id="IPR050117">
    <property type="entry name" value="MAP_kinase"/>
</dbReference>
<dbReference type="InterPro" id="IPR003527">
    <property type="entry name" value="MAP_kinase_CS"/>
</dbReference>
<dbReference type="InterPro" id="IPR000719">
    <property type="entry name" value="Prot_kinase_dom"/>
</dbReference>
<dbReference type="InterPro" id="IPR017441">
    <property type="entry name" value="Protein_kinase_ATP_BS"/>
</dbReference>
<dbReference type="InterPro" id="IPR008271">
    <property type="entry name" value="Ser/Thr_kinase_AS"/>
</dbReference>
<dbReference type="PANTHER" id="PTHR24055">
    <property type="entry name" value="MITOGEN-ACTIVATED PROTEIN KINASE"/>
    <property type="match status" value="1"/>
</dbReference>
<dbReference type="Pfam" id="PF00069">
    <property type="entry name" value="Pkinase"/>
    <property type="match status" value="1"/>
</dbReference>
<dbReference type="SMART" id="SM00220">
    <property type="entry name" value="S_TKc"/>
    <property type="match status" value="1"/>
</dbReference>
<dbReference type="SUPFAM" id="SSF56112">
    <property type="entry name" value="Protein kinase-like (PK-like)"/>
    <property type="match status" value="1"/>
</dbReference>
<dbReference type="PROSITE" id="PS01351">
    <property type="entry name" value="MAPK"/>
    <property type="match status" value="1"/>
</dbReference>
<dbReference type="PROSITE" id="PS00107">
    <property type="entry name" value="PROTEIN_KINASE_ATP"/>
    <property type="match status" value="1"/>
</dbReference>
<dbReference type="PROSITE" id="PS50011">
    <property type="entry name" value="PROTEIN_KINASE_DOM"/>
    <property type="match status" value="1"/>
</dbReference>
<dbReference type="PROSITE" id="PS00108">
    <property type="entry name" value="PROTEIN_KINASE_ST"/>
    <property type="match status" value="1"/>
</dbReference>
<evidence type="ECO:0000250" key="1"/>
<evidence type="ECO:0000255" key="2">
    <source>
        <dbReference type="PROSITE-ProRule" id="PRU00159"/>
    </source>
</evidence>
<evidence type="ECO:0000255" key="3">
    <source>
        <dbReference type="PROSITE-ProRule" id="PRU10027"/>
    </source>
</evidence>
<evidence type="ECO:0000269" key="4">
    <source>
    </source>
</evidence>
<evidence type="ECO:0000305" key="5"/>
<name>MMK1_MEDSA</name>
<proteinExistence type="evidence at protein level"/>
<comment type="function">
    <text>May play a role in the mitogenic induction of symbiotic root nodules on Alfalfa by Rhizobium signal molecules.</text>
</comment>
<comment type="catalytic activity">
    <reaction>
        <text>L-seryl-[protein] + ATP = O-phospho-L-seryl-[protein] + ADP + H(+)</text>
        <dbReference type="Rhea" id="RHEA:17989"/>
        <dbReference type="Rhea" id="RHEA-COMP:9863"/>
        <dbReference type="Rhea" id="RHEA-COMP:11604"/>
        <dbReference type="ChEBI" id="CHEBI:15378"/>
        <dbReference type="ChEBI" id="CHEBI:29999"/>
        <dbReference type="ChEBI" id="CHEBI:30616"/>
        <dbReference type="ChEBI" id="CHEBI:83421"/>
        <dbReference type="ChEBI" id="CHEBI:456216"/>
        <dbReference type="EC" id="2.7.11.24"/>
    </reaction>
</comment>
<comment type="catalytic activity">
    <reaction>
        <text>L-threonyl-[protein] + ATP = O-phospho-L-threonyl-[protein] + ADP + H(+)</text>
        <dbReference type="Rhea" id="RHEA:46608"/>
        <dbReference type="Rhea" id="RHEA-COMP:11060"/>
        <dbReference type="Rhea" id="RHEA-COMP:11605"/>
        <dbReference type="ChEBI" id="CHEBI:15378"/>
        <dbReference type="ChEBI" id="CHEBI:30013"/>
        <dbReference type="ChEBI" id="CHEBI:30616"/>
        <dbReference type="ChEBI" id="CHEBI:61977"/>
        <dbReference type="ChEBI" id="CHEBI:456216"/>
        <dbReference type="EC" id="2.7.11.24"/>
    </reaction>
</comment>
<comment type="cofactor">
    <cofactor evidence="1">
        <name>Mg(2+)</name>
        <dbReference type="ChEBI" id="CHEBI:18420"/>
    </cofactor>
</comment>
<comment type="activity regulation">
    <text evidence="1">Activated by tyrosine and threonine phosphorylation.</text>
</comment>
<comment type="tissue specificity">
    <text>Roots and stems.</text>
</comment>
<comment type="domain">
    <text>The TXY motif contains the threonine and tyrosine residues whose phosphorylation activates the MAP kinases.</text>
</comment>
<comment type="PTM">
    <text evidence="1 4">Dually phosphorylated on Thr-213 and Tyr-215, which activates the enzyme (By similarity). Autophosphorylated.</text>
</comment>
<comment type="similarity">
    <text evidence="5">Belongs to the protein kinase superfamily. CMGC Ser/Thr protein kinase family. MAP kinase subfamily.</text>
</comment>
<accession>Q07176</accession>
<feature type="chain" id="PRO_0000186317" description="Mitogen-activated protein kinase homolog MMK1">
    <location>
        <begin position="1"/>
        <end position="387"/>
    </location>
</feature>
<feature type="domain" description="Protein kinase" evidence="2">
    <location>
        <begin position="55"/>
        <end position="340"/>
    </location>
</feature>
<feature type="short sequence motif" description="TXY">
    <location>
        <begin position="213"/>
        <end position="215"/>
    </location>
</feature>
<feature type="active site" description="Proton acceptor" evidence="2 3">
    <location>
        <position position="181"/>
    </location>
</feature>
<feature type="binding site" evidence="2">
    <location>
        <begin position="61"/>
        <end position="69"/>
    </location>
    <ligand>
        <name>ATP</name>
        <dbReference type="ChEBI" id="CHEBI:30616"/>
    </ligand>
</feature>
<feature type="binding site" evidence="2">
    <location>
        <position position="84"/>
    </location>
    <ligand>
        <name>ATP</name>
        <dbReference type="ChEBI" id="CHEBI:30616"/>
    </ligand>
</feature>
<feature type="modified residue" description="Phosphothreonine" evidence="1">
    <location>
        <position position="213"/>
    </location>
</feature>
<feature type="modified residue" description="Phosphotyrosine" evidence="4">
    <location>
        <position position="215"/>
    </location>
</feature>
<reference key="1">
    <citation type="journal article" date="1993" name="Plant J.">
        <title>The plant homologue of MAP kinase is expressed in a cell cycle-dependent and organ-specific manner.</title>
        <authorList>
            <person name="Jonak C."/>
            <person name="Pay A."/>
            <person name="Boegre L."/>
            <person name="Hirt H."/>
            <person name="Heberle-Bors E."/>
        </authorList>
    </citation>
    <scope>NUCLEOTIDE SEQUENCE [MRNA]</scope>
    <source>
        <tissue>Embryo</tissue>
    </source>
</reference>
<reference key="2">
    <citation type="journal article" date="1993" name="Plant Cell">
        <title>MsERK1: a mitogen-activated protein kinase from a flowering plant.</title>
        <authorList>
            <person name="Duerr B."/>
            <person name="Gawienowski M."/>
            <person name="Ropp T."/>
            <person name="Jacobs T."/>
        </authorList>
    </citation>
    <scope>NUCLEOTIDE SEQUENCE [MRNA]</scope>
    <scope>PHOSPHORYLATION AT TYR-215</scope>
    <source>
        <strain>cv. Iroquois</strain>
        <tissue>Seedling root</tissue>
    </source>
</reference>
<keyword id="KW-0067">ATP-binding</keyword>
<keyword id="KW-0131">Cell cycle</keyword>
<keyword id="KW-0132">Cell division</keyword>
<keyword id="KW-0184">Conjugation</keyword>
<keyword id="KW-0418">Kinase</keyword>
<keyword id="KW-0498">Mitosis</keyword>
<keyword id="KW-0547">Nucleotide-binding</keyword>
<keyword id="KW-0597">Phosphoprotein</keyword>
<keyword id="KW-0723">Serine/threonine-protein kinase</keyword>
<keyword id="KW-0808">Transferase</keyword>